<dbReference type="EMBL" id="CR382137">
    <property type="protein sequence ID" value="CAG87938.2"/>
    <property type="molecule type" value="Genomic_DNA"/>
</dbReference>
<dbReference type="RefSeq" id="XP_459702.2">
    <property type="nucleotide sequence ID" value="XM_459702.1"/>
</dbReference>
<dbReference type="SMR" id="Q6BQ18"/>
<dbReference type="FunCoup" id="Q6BQ18">
    <property type="interactions" value="527"/>
</dbReference>
<dbReference type="STRING" id="284592.Q6BQ18"/>
<dbReference type="GeneID" id="2901849"/>
<dbReference type="KEGG" id="dha:DEHA2E09064g"/>
<dbReference type="VEuPathDB" id="FungiDB:DEHA2E09064g"/>
<dbReference type="eggNOG" id="KOG2587">
    <property type="taxonomic scope" value="Eukaryota"/>
</dbReference>
<dbReference type="HOGENOM" id="CLU_010734_0_0_1"/>
<dbReference type="InParanoid" id="Q6BQ18"/>
<dbReference type="OMA" id="KHRFVRH"/>
<dbReference type="OrthoDB" id="272392at2759"/>
<dbReference type="Proteomes" id="UP000000599">
    <property type="component" value="Chromosome E"/>
</dbReference>
<dbReference type="GO" id="GO:0005666">
    <property type="term" value="C:RNA polymerase III complex"/>
    <property type="evidence" value="ECO:0007669"/>
    <property type="project" value="EnsemblFungi"/>
</dbReference>
<dbReference type="GO" id="GO:0003899">
    <property type="term" value="F:DNA-directed RNA polymerase activity"/>
    <property type="evidence" value="ECO:0007669"/>
    <property type="project" value="EnsemblFungi"/>
</dbReference>
<dbReference type="GO" id="GO:0003697">
    <property type="term" value="F:single-stranded DNA binding"/>
    <property type="evidence" value="ECO:0007669"/>
    <property type="project" value="InterPro"/>
</dbReference>
<dbReference type="GO" id="GO:0006386">
    <property type="term" value="P:termination of RNA polymerase III transcription"/>
    <property type="evidence" value="ECO:0007669"/>
    <property type="project" value="EnsemblFungi"/>
</dbReference>
<dbReference type="GO" id="GO:0006384">
    <property type="term" value="P:transcription initiation at RNA polymerase III promoter"/>
    <property type="evidence" value="ECO:0007669"/>
    <property type="project" value="EnsemblFungi"/>
</dbReference>
<dbReference type="GO" id="GO:0042797">
    <property type="term" value="P:tRNA transcription by RNA polymerase III"/>
    <property type="evidence" value="ECO:0007669"/>
    <property type="project" value="EnsemblFungi"/>
</dbReference>
<dbReference type="Gene3D" id="1.10.10.10">
    <property type="entry name" value="Winged helix-like DNA-binding domain superfamily/Winged helix DNA-binding domain"/>
    <property type="match status" value="2"/>
</dbReference>
<dbReference type="InterPro" id="IPR055207">
    <property type="entry name" value="POLR3C_WHD"/>
</dbReference>
<dbReference type="InterPro" id="IPR013197">
    <property type="entry name" value="RNA_pol_III_RPC82-rel_HTH"/>
</dbReference>
<dbReference type="InterPro" id="IPR008806">
    <property type="entry name" value="RNA_pol_III_Rpc82_C"/>
</dbReference>
<dbReference type="InterPro" id="IPR039748">
    <property type="entry name" value="RPC3"/>
</dbReference>
<dbReference type="InterPro" id="IPR036388">
    <property type="entry name" value="WH-like_DNA-bd_sf"/>
</dbReference>
<dbReference type="PANTHER" id="PTHR12949:SF0">
    <property type="entry name" value="DNA-DIRECTED RNA POLYMERASE III SUBUNIT RPC3"/>
    <property type="match status" value="1"/>
</dbReference>
<dbReference type="PANTHER" id="PTHR12949">
    <property type="entry name" value="RNA POLYMERASE III DNA DIRECTED -RELATED"/>
    <property type="match status" value="1"/>
</dbReference>
<dbReference type="Pfam" id="PF08221">
    <property type="entry name" value="HTH_9"/>
    <property type="match status" value="1"/>
</dbReference>
<dbReference type="Pfam" id="PF22536">
    <property type="entry name" value="POLR3C_WHD"/>
    <property type="match status" value="1"/>
</dbReference>
<dbReference type="Pfam" id="PF05645">
    <property type="entry name" value="RNA_pol_Rpc82"/>
    <property type="match status" value="1"/>
</dbReference>
<dbReference type="Pfam" id="PF20912">
    <property type="entry name" value="RPC3_helical"/>
    <property type="match status" value="1"/>
</dbReference>
<keyword id="KW-0240">DNA-directed RNA polymerase</keyword>
<keyword id="KW-0539">Nucleus</keyword>
<keyword id="KW-1185">Reference proteome</keyword>
<keyword id="KW-0804">Transcription</keyword>
<keyword id="KW-0862">Zinc</keyword>
<protein>
    <recommendedName>
        <fullName>DNA-directed RNA polymerase III subunit RPC3</fullName>
        <shortName>RNA polymerase III subunit C3</shortName>
    </recommendedName>
</protein>
<gene>
    <name type="primary">RPC82</name>
    <name type="synonym">RPC3</name>
    <name type="ordered locus">DEHA2E09064g</name>
</gene>
<organism>
    <name type="scientific">Debaryomyces hansenii (strain ATCC 36239 / CBS 767 / BCRC 21394 / JCM 1990 / NBRC 0083 / IGC 2968)</name>
    <name type="common">Yeast</name>
    <name type="synonym">Torulaspora hansenii</name>
    <dbReference type="NCBI Taxonomy" id="284592"/>
    <lineage>
        <taxon>Eukaryota</taxon>
        <taxon>Fungi</taxon>
        <taxon>Dikarya</taxon>
        <taxon>Ascomycota</taxon>
        <taxon>Saccharomycotina</taxon>
        <taxon>Pichiomycetes</taxon>
        <taxon>Debaryomycetaceae</taxon>
        <taxon>Debaryomyces</taxon>
    </lineage>
</organism>
<proteinExistence type="inferred from homology"/>
<accession>Q6BQ18</accession>
<comment type="function">
    <text evidence="1">DNA-dependent RNA polymerase catalyzes the transcription of DNA into RNA using the four ribonucleoside triphosphates as substrates. Specific core component of RNA polymerase III which synthesizes small RNAs, such as 5S rRNA and tRNAs (By similarity).</text>
</comment>
<comment type="subunit">
    <text evidence="1">Component of the RNA polymerase III (Pol III) complex consisting of 17 subunits.</text>
</comment>
<comment type="subcellular location">
    <subcellularLocation>
        <location evidence="1">Nucleus</location>
    </subcellularLocation>
</comment>
<comment type="similarity">
    <text evidence="2">Belongs to the RNA polymerase beta chain family.</text>
</comment>
<name>RPC3_DEBHA</name>
<reference key="1">
    <citation type="journal article" date="2004" name="Nature">
        <title>Genome evolution in yeasts.</title>
        <authorList>
            <person name="Dujon B."/>
            <person name="Sherman D."/>
            <person name="Fischer G."/>
            <person name="Durrens P."/>
            <person name="Casaregola S."/>
            <person name="Lafontaine I."/>
            <person name="de Montigny J."/>
            <person name="Marck C."/>
            <person name="Neuveglise C."/>
            <person name="Talla E."/>
            <person name="Goffard N."/>
            <person name="Frangeul L."/>
            <person name="Aigle M."/>
            <person name="Anthouard V."/>
            <person name="Babour A."/>
            <person name="Barbe V."/>
            <person name="Barnay S."/>
            <person name="Blanchin S."/>
            <person name="Beckerich J.-M."/>
            <person name="Beyne E."/>
            <person name="Bleykasten C."/>
            <person name="Boisrame A."/>
            <person name="Boyer J."/>
            <person name="Cattolico L."/>
            <person name="Confanioleri F."/>
            <person name="de Daruvar A."/>
            <person name="Despons L."/>
            <person name="Fabre E."/>
            <person name="Fairhead C."/>
            <person name="Ferry-Dumazet H."/>
            <person name="Groppi A."/>
            <person name="Hantraye F."/>
            <person name="Hennequin C."/>
            <person name="Jauniaux N."/>
            <person name="Joyet P."/>
            <person name="Kachouri R."/>
            <person name="Kerrest A."/>
            <person name="Koszul R."/>
            <person name="Lemaire M."/>
            <person name="Lesur I."/>
            <person name="Ma L."/>
            <person name="Muller H."/>
            <person name="Nicaud J.-M."/>
            <person name="Nikolski M."/>
            <person name="Oztas S."/>
            <person name="Ozier-Kalogeropoulos O."/>
            <person name="Pellenz S."/>
            <person name="Potier S."/>
            <person name="Richard G.-F."/>
            <person name="Straub M.-L."/>
            <person name="Suleau A."/>
            <person name="Swennen D."/>
            <person name="Tekaia F."/>
            <person name="Wesolowski-Louvel M."/>
            <person name="Westhof E."/>
            <person name="Wirth B."/>
            <person name="Zeniou-Meyer M."/>
            <person name="Zivanovic Y."/>
            <person name="Bolotin-Fukuhara M."/>
            <person name="Thierry A."/>
            <person name="Bouchier C."/>
            <person name="Caudron B."/>
            <person name="Scarpelli C."/>
            <person name="Gaillardin C."/>
            <person name="Weissenbach J."/>
            <person name="Wincker P."/>
            <person name="Souciet J.-L."/>
        </authorList>
    </citation>
    <scope>NUCLEOTIDE SEQUENCE [LARGE SCALE GENOMIC DNA]</scope>
    <source>
        <strain>ATCC 36239 / CBS 767 / BCRC 21394 / JCM 1990 / NBRC 0083 / IGC 2968</strain>
    </source>
</reference>
<sequence length="606" mass="69479">MNAVVPDSAKTQSAKSNLYTTLAKTHLGEVAAIIVSTLISYGRLTAKDLSNKSEVPLKLVKSTLVSLIQLSCISYWKEESSKQVFYSFNENGLLIFLHSGDIINHIKLTYGDESAGIIQNIIEVGHMKIEDYLQNIEDPEVVFNKENLLLKLFSDGWLSRVQMSNFQPIDDLWNQLYQETLKNTPRSTTISEIKRVNEAKDKTKLKFTNLLESGNSAKELFQIENGIKKLAPSLVIAFNLSRFEKHRRTEQLTNLAKARIGILTSKVYECALQLIEQHSPDLRHSFLKISGLINDPVEEQAFVNSIENQLVDDKKIVFNVKDLVKIAPKDLDLRNSILTHNFLKPTFNPKKRVNDDIPDTNPKKIKTEDGMNNLMIDLDPDVSENNLDFDMHNTDNSEPHSVSLINHHLKLLSSGVIPFLIEITPGTYTVPYTDLMKYVKQCNYDTLIKTTLGLDSFRLLRCLKSLKLADEKTLANTILLKEKTVRNELFKLMNLNMIEIQEVPRSADRAASKTFYLFRHKEFSAYNFLYNSLTFCMADILSNIQQFKNDNKILLEKCEREDVKGNEEELLLESELKTLKNLQLREINNIGKFNRIKTLYEIFDNF</sequence>
<evidence type="ECO:0000250" key="1"/>
<evidence type="ECO:0000305" key="2"/>
<feature type="chain" id="PRO_0000351033" description="DNA-directed RNA polymerase III subunit RPC3">
    <location>
        <begin position="1"/>
        <end position="606"/>
    </location>
</feature>
<feature type="region of interest" description="Leucine-zipper">
    <location>
        <begin position="533"/>
        <end position="554"/>
    </location>
</feature>